<reference key="1">
    <citation type="journal article" date="1993" name="Toxicon">
        <title>Purification and properties of a crotamine analog from Crotalus durissus ruruima venom.</title>
        <authorList>
            <person name="Dos Santos M.C."/>
            <person name="Morhy L."/>
            <person name="Ferreira L.C.L."/>
            <person name="Oliveira E.B."/>
        </authorList>
    </citation>
    <scope>PROTEIN SEQUENCE</scope>
    <scope>FUNCTION</scope>
    <scope>SUBCELLULAR LOCATION</scope>
    <source>
        <tissue>Venom</tissue>
    </source>
</reference>
<reference key="2">
    <citation type="journal article" date="2013" name="Acta Crystallogr. D">
        <title>Structure of the polypeptide crotamine from the Brazilian rattlesnake Crotalus durissus terrificus.</title>
        <authorList>
            <person name="Coronado M.A."/>
            <person name="Gabdulkhakov A."/>
            <person name="Georgieva D."/>
            <person name="Sankaran B."/>
            <person name="Murakami M.T."/>
            <person name="Arni R.K."/>
            <person name="Betzel C."/>
        </authorList>
    </citation>
    <scope>X-RAY CRYSTALLOGRAPHY (1.7 ANGSTROMS)</scope>
    <scope>DISULFIDE BOND</scope>
    <source>
        <tissue>Venom</tissue>
    </source>
</reference>
<name>MYX_CRODR</name>
<comment type="function">
    <text evidence="2 4">Cationic peptide that possesses multiple functions. It acts as a cell-penetrating peptide (CPP), and as a potent voltage-gated potassium channel (Kv) inhibitor, it induces severe muscle necrosis by a non-enzymatic mechanism and exhibits antimicrobial activities (By similarity). It also elicits a short-lasting hyperextension of the hind limb (Ref.1). It does not cause observable tissue damage (whereas the whole venom causes severe myonecrosis accompanied by edema and hemorrhage) (Ref.1).</text>
</comment>
<comment type="subunit">
    <text evidence="1">Monomer.</text>
</comment>
<comment type="subcellular location">
    <subcellularLocation>
        <location evidence="4">Secreted</location>
    </subcellularLocation>
</comment>
<comment type="tissue specificity">
    <text evidence="8">Expressed by the venom gland.</text>
</comment>
<comment type="similarity">
    <text evidence="7">Belongs to the crotamine-myotoxin family.</text>
</comment>
<keyword id="KW-0002">3D-structure</keyword>
<keyword id="KW-0929">Antimicrobial</keyword>
<keyword id="KW-0903">Direct protein sequencing</keyword>
<keyword id="KW-1015">Disulfide bond</keyword>
<keyword id="KW-0872">Ion channel impairing toxin</keyword>
<keyword id="KW-0959">Myotoxin</keyword>
<keyword id="KW-0528">Neurotoxin</keyword>
<keyword id="KW-0632">Potassium channel impairing toxin</keyword>
<keyword id="KW-0964">Secreted</keyword>
<keyword id="KW-0800">Toxin</keyword>
<keyword id="KW-1220">Voltage-gated potassium channel impairing toxin</keyword>
<dbReference type="PDB" id="4GV5">
    <property type="method" value="X-ray"/>
    <property type="resolution" value="1.70 A"/>
    <property type="chains" value="A/B/C=1-42"/>
</dbReference>
<dbReference type="PDBsum" id="4GV5"/>
<dbReference type="BMRB" id="P63327"/>
<dbReference type="SMR" id="P63327"/>
<dbReference type="GO" id="GO:0005576">
    <property type="term" value="C:extracellular region"/>
    <property type="evidence" value="ECO:0007669"/>
    <property type="project" value="UniProtKB-SubCell"/>
</dbReference>
<dbReference type="GO" id="GO:0015459">
    <property type="term" value="F:potassium channel regulator activity"/>
    <property type="evidence" value="ECO:0007669"/>
    <property type="project" value="UniProtKB-KW"/>
</dbReference>
<dbReference type="GO" id="GO:0090729">
    <property type="term" value="F:toxin activity"/>
    <property type="evidence" value="ECO:0007669"/>
    <property type="project" value="UniProtKB-KW"/>
</dbReference>
<dbReference type="GO" id="GO:0044564">
    <property type="term" value="P:envenomation resulting in occlusion of the pore of voltage-gated potassium channel in another organism"/>
    <property type="evidence" value="ECO:0000250"/>
    <property type="project" value="UniProtKB"/>
</dbReference>
<dbReference type="FunFam" id="2.20.20.10:FF:000001">
    <property type="entry name" value="Crotamine"/>
    <property type="match status" value="1"/>
</dbReference>
<dbReference type="Gene3D" id="2.20.20.10">
    <property type="entry name" value="Anthopleurin-A"/>
    <property type="match status" value="1"/>
</dbReference>
<dbReference type="InterPro" id="IPR023355">
    <property type="entry name" value="Myo_ane_neurotoxin_sf"/>
</dbReference>
<dbReference type="InterPro" id="IPR000881">
    <property type="entry name" value="Myotoxin"/>
</dbReference>
<dbReference type="Pfam" id="PF00819">
    <property type="entry name" value="Myotoxins"/>
    <property type="match status" value="1"/>
</dbReference>
<dbReference type="PRINTS" id="PR00283">
    <property type="entry name" value="MYOTOXIN"/>
</dbReference>
<dbReference type="SUPFAM" id="SSF57392">
    <property type="entry name" value="Defensin-like"/>
    <property type="match status" value="1"/>
</dbReference>
<dbReference type="PROSITE" id="PS00459">
    <property type="entry name" value="MYOTOXINS_1"/>
    <property type="match status" value="1"/>
</dbReference>
<dbReference type="PROSITE" id="PS51345">
    <property type="entry name" value="MYOTOXINS_2"/>
    <property type="match status" value="1"/>
</dbReference>
<protein>
    <recommendedName>
        <fullName evidence="5 6">Crotamine Ile-19</fullName>
        <shortName evidence="6">CRO_Ile-19</shortName>
    </recommendedName>
</protein>
<proteinExistence type="evidence at protein level"/>
<sequence length="42" mass="4890">YKQCHKKGGHCFPKEKICIPPSSDFGKMDCRWRWKCCKKGSG</sequence>
<accession>P63327</accession>
<feature type="chain" id="PRO_0000221563" description="Crotamine Ile-19" evidence="4">
    <location>
        <begin position="1"/>
        <end position="42"/>
    </location>
</feature>
<feature type="disulfide bond" evidence="3 9">
    <location>
        <begin position="4"/>
        <end position="36"/>
    </location>
</feature>
<feature type="disulfide bond" evidence="3 9">
    <location>
        <begin position="11"/>
        <end position="30"/>
    </location>
</feature>
<feature type="disulfide bond" evidence="3 9">
    <location>
        <begin position="18"/>
        <end position="37"/>
    </location>
</feature>
<evidence type="ECO:0000250" key="1"/>
<evidence type="ECO:0000250" key="2">
    <source>
        <dbReference type="UniProtKB" id="Q9PWF3"/>
    </source>
</evidence>
<evidence type="ECO:0000269" key="3">
    <source>
    </source>
</evidence>
<evidence type="ECO:0000269" key="4">
    <source ref="1"/>
</evidence>
<evidence type="ECO:0000303" key="5">
    <source>
    </source>
</evidence>
<evidence type="ECO:0000303" key="6">
    <source ref="1"/>
</evidence>
<evidence type="ECO:0000305" key="7"/>
<evidence type="ECO:0000305" key="8">
    <source ref="1"/>
</evidence>
<evidence type="ECO:0000312" key="9">
    <source>
        <dbReference type="PDB" id="4GV5"/>
    </source>
</evidence>
<organism>
    <name type="scientific">Crotalus durissus ruruima</name>
    <name type="common">South American rattlesnake</name>
    <name type="synonym">Mt. Roraima rattlesnake</name>
    <dbReference type="NCBI Taxonomy" id="221570"/>
    <lineage>
        <taxon>Eukaryota</taxon>
        <taxon>Metazoa</taxon>
        <taxon>Chordata</taxon>
        <taxon>Craniata</taxon>
        <taxon>Vertebrata</taxon>
        <taxon>Euteleostomi</taxon>
        <taxon>Lepidosauria</taxon>
        <taxon>Squamata</taxon>
        <taxon>Bifurcata</taxon>
        <taxon>Unidentata</taxon>
        <taxon>Episquamata</taxon>
        <taxon>Toxicofera</taxon>
        <taxon>Serpentes</taxon>
        <taxon>Colubroidea</taxon>
        <taxon>Viperidae</taxon>
        <taxon>Crotalinae</taxon>
        <taxon>Crotalus</taxon>
    </lineage>
</organism>